<reference key="1">
    <citation type="submission" date="1997-02" db="EMBL/GenBank/DDBJ databases">
        <authorList>
            <person name="Parro V."/>
            <person name="Mellado R.P."/>
        </authorList>
    </citation>
    <scope>NUCLEOTIDE SEQUENCE [GENOMIC DNA]</scope>
    <source>
        <strain>TK21</strain>
    </source>
</reference>
<gene>
    <name evidence="1" type="primary">rpsP</name>
</gene>
<proteinExistence type="inferred from homology"/>
<protein>
    <recommendedName>
        <fullName evidence="1">Small ribosomal subunit protein bS16</fullName>
    </recommendedName>
    <alternativeName>
        <fullName evidence="3">30S ribosomal protein S16</fullName>
    </alternativeName>
</protein>
<sequence>MAVKIKLKRLGKIRSPHYRIVVADSRTRRDGRAIEEIGKYHPTYNPSVMEVDAERVAYWLGVGAQPTEPVLAILKKTGDWQKFKGEPAPAPLLQPAEKAARPSFEAIGGEDEGKGEAITQKKKADKRDEAAAESSASEA</sequence>
<comment type="similarity">
    <text evidence="1">Belongs to the bacterial ribosomal protein bS16 family.</text>
</comment>
<accession>O86868</accession>
<keyword id="KW-0687">Ribonucleoprotein</keyword>
<keyword id="KW-0689">Ribosomal protein</keyword>
<dbReference type="EMBL" id="Z86111">
    <property type="protein sequence ID" value="CAB06804.1"/>
    <property type="molecule type" value="Genomic_DNA"/>
</dbReference>
<dbReference type="SMR" id="O86868"/>
<dbReference type="GO" id="GO:0005737">
    <property type="term" value="C:cytoplasm"/>
    <property type="evidence" value="ECO:0007669"/>
    <property type="project" value="UniProtKB-ARBA"/>
</dbReference>
<dbReference type="GO" id="GO:0015935">
    <property type="term" value="C:small ribosomal subunit"/>
    <property type="evidence" value="ECO:0007669"/>
    <property type="project" value="TreeGrafter"/>
</dbReference>
<dbReference type="GO" id="GO:0003735">
    <property type="term" value="F:structural constituent of ribosome"/>
    <property type="evidence" value="ECO:0007669"/>
    <property type="project" value="InterPro"/>
</dbReference>
<dbReference type="GO" id="GO:0006412">
    <property type="term" value="P:translation"/>
    <property type="evidence" value="ECO:0007669"/>
    <property type="project" value="UniProtKB-UniRule"/>
</dbReference>
<dbReference type="FunFam" id="3.30.1320.10:FF:000009">
    <property type="entry name" value="30S ribosomal protein S16"/>
    <property type="match status" value="1"/>
</dbReference>
<dbReference type="Gene3D" id="3.30.1320.10">
    <property type="match status" value="1"/>
</dbReference>
<dbReference type="HAMAP" id="MF_00385">
    <property type="entry name" value="Ribosomal_bS16"/>
    <property type="match status" value="1"/>
</dbReference>
<dbReference type="InterPro" id="IPR000307">
    <property type="entry name" value="Ribosomal_bS16"/>
</dbReference>
<dbReference type="InterPro" id="IPR020592">
    <property type="entry name" value="Ribosomal_bS16_CS"/>
</dbReference>
<dbReference type="InterPro" id="IPR023803">
    <property type="entry name" value="Ribosomal_bS16_dom_sf"/>
</dbReference>
<dbReference type="NCBIfam" id="NF011093">
    <property type="entry name" value="PRK14520.1"/>
    <property type="match status" value="1"/>
</dbReference>
<dbReference type="NCBIfam" id="TIGR00002">
    <property type="entry name" value="S16"/>
    <property type="match status" value="1"/>
</dbReference>
<dbReference type="PANTHER" id="PTHR12919">
    <property type="entry name" value="30S RIBOSOMAL PROTEIN S16"/>
    <property type="match status" value="1"/>
</dbReference>
<dbReference type="PANTHER" id="PTHR12919:SF20">
    <property type="entry name" value="SMALL RIBOSOMAL SUBUNIT PROTEIN BS16M"/>
    <property type="match status" value="1"/>
</dbReference>
<dbReference type="Pfam" id="PF00886">
    <property type="entry name" value="Ribosomal_S16"/>
    <property type="match status" value="1"/>
</dbReference>
<dbReference type="SUPFAM" id="SSF54565">
    <property type="entry name" value="Ribosomal protein S16"/>
    <property type="match status" value="1"/>
</dbReference>
<dbReference type="PROSITE" id="PS00732">
    <property type="entry name" value="RIBOSOMAL_S16"/>
    <property type="match status" value="1"/>
</dbReference>
<organism>
    <name type="scientific">Streptomyces lividans</name>
    <dbReference type="NCBI Taxonomy" id="1916"/>
    <lineage>
        <taxon>Bacteria</taxon>
        <taxon>Bacillati</taxon>
        <taxon>Actinomycetota</taxon>
        <taxon>Actinomycetes</taxon>
        <taxon>Kitasatosporales</taxon>
        <taxon>Streptomycetaceae</taxon>
        <taxon>Streptomyces</taxon>
    </lineage>
</organism>
<feature type="chain" id="PRO_0000167255" description="Small ribosomal subunit protein bS16">
    <location>
        <begin position="1"/>
        <end position="139"/>
    </location>
</feature>
<feature type="region of interest" description="Disordered" evidence="2">
    <location>
        <begin position="84"/>
        <end position="139"/>
    </location>
</feature>
<name>RS16_STRLI</name>
<evidence type="ECO:0000255" key="1">
    <source>
        <dbReference type="HAMAP-Rule" id="MF_00385"/>
    </source>
</evidence>
<evidence type="ECO:0000256" key="2">
    <source>
        <dbReference type="SAM" id="MobiDB-lite"/>
    </source>
</evidence>
<evidence type="ECO:0000305" key="3"/>